<proteinExistence type="inferred from homology"/>
<protein>
    <recommendedName>
        <fullName evidence="1">Small ribosomal subunit protein bS16</fullName>
    </recommendedName>
    <alternativeName>
        <fullName evidence="2">30S ribosomal protein S16</fullName>
    </alternativeName>
</protein>
<gene>
    <name evidence="1" type="primary">rpsP</name>
    <name type="ordered locus">MHJ_0278</name>
</gene>
<feature type="chain" id="PRO_0000243830" description="Small ribosomal subunit protein bS16">
    <location>
        <begin position="1"/>
        <end position="88"/>
    </location>
</feature>
<dbReference type="EMBL" id="AE017243">
    <property type="protein sequence ID" value="AAZ44369.1"/>
    <property type="molecule type" value="Genomic_DNA"/>
</dbReference>
<dbReference type="RefSeq" id="WP_011205932.1">
    <property type="nucleotide sequence ID" value="NC_007295.1"/>
</dbReference>
<dbReference type="SMR" id="Q4AA52"/>
<dbReference type="GeneID" id="41334589"/>
<dbReference type="KEGG" id="mhj:MHJ_0278"/>
<dbReference type="eggNOG" id="COG0228">
    <property type="taxonomic scope" value="Bacteria"/>
</dbReference>
<dbReference type="HOGENOM" id="CLU_100590_5_0_14"/>
<dbReference type="OrthoDB" id="9807878at2"/>
<dbReference type="Proteomes" id="UP000000548">
    <property type="component" value="Chromosome"/>
</dbReference>
<dbReference type="GO" id="GO:0005737">
    <property type="term" value="C:cytoplasm"/>
    <property type="evidence" value="ECO:0007669"/>
    <property type="project" value="UniProtKB-ARBA"/>
</dbReference>
<dbReference type="GO" id="GO:0015935">
    <property type="term" value="C:small ribosomal subunit"/>
    <property type="evidence" value="ECO:0007669"/>
    <property type="project" value="TreeGrafter"/>
</dbReference>
<dbReference type="GO" id="GO:0003735">
    <property type="term" value="F:structural constituent of ribosome"/>
    <property type="evidence" value="ECO:0007669"/>
    <property type="project" value="InterPro"/>
</dbReference>
<dbReference type="GO" id="GO:0006412">
    <property type="term" value="P:translation"/>
    <property type="evidence" value="ECO:0007669"/>
    <property type="project" value="UniProtKB-UniRule"/>
</dbReference>
<dbReference type="Gene3D" id="3.30.1320.10">
    <property type="match status" value="1"/>
</dbReference>
<dbReference type="HAMAP" id="MF_00385">
    <property type="entry name" value="Ribosomal_bS16"/>
    <property type="match status" value="1"/>
</dbReference>
<dbReference type="InterPro" id="IPR000307">
    <property type="entry name" value="Ribosomal_bS16"/>
</dbReference>
<dbReference type="InterPro" id="IPR023803">
    <property type="entry name" value="Ribosomal_bS16_dom_sf"/>
</dbReference>
<dbReference type="NCBIfam" id="TIGR00002">
    <property type="entry name" value="S16"/>
    <property type="match status" value="1"/>
</dbReference>
<dbReference type="PANTHER" id="PTHR12919">
    <property type="entry name" value="30S RIBOSOMAL PROTEIN S16"/>
    <property type="match status" value="1"/>
</dbReference>
<dbReference type="PANTHER" id="PTHR12919:SF20">
    <property type="entry name" value="SMALL RIBOSOMAL SUBUNIT PROTEIN BS16M"/>
    <property type="match status" value="1"/>
</dbReference>
<dbReference type="Pfam" id="PF00886">
    <property type="entry name" value="Ribosomal_S16"/>
    <property type="match status" value="1"/>
</dbReference>
<dbReference type="SUPFAM" id="SSF54565">
    <property type="entry name" value="Ribosomal protein S16"/>
    <property type="match status" value="1"/>
</dbReference>
<keyword id="KW-0687">Ribonucleoprotein</keyword>
<keyword id="KW-0689">Ribosomal protein</keyword>
<name>RS16_MESHJ</name>
<sequence length="88" mass="10354">MVRIRLQRMGSKFNPFYKIVVADARAPRDGRFIEALGYYNPQQKFAKVNLEKTYRWLHIGAQVTQTVRNIFSKKGVFKNFLEQKSSRA</sequence>
<evidence type="ECO:0000255" key="1">
    <source>
        <dbReference type="HAMAP-Rule" id="MF_00385"/>
    </source>
</evidence>
<evidence type="ECO:0000305" key="2"/>
<comment type="similarity">
    <text evidence="1">Belongs to the bacterial ribosomal protein bS16 family.</text>
</comment>
<organism>
    <name type="scientific">Mesomycoplasma hyopneumoniae (strain J / ATCC 25934 / NCTC 10110)</name>
    <name type="common">Mycoplasma hyopneumoniae</name>
    <dbReference type="NCBI Taxonomy" id="262719"/>
    <lineage>
        <taxon>Bacteria</taxon>
        <taxon>Bacillati</taxon>
        <taxon>Mycoplasmatota</taxon>
        <taxon>Mycoplasmoidales</taxon>
        <taxon>Metamycoplasmataceae</taxon>
        <taxon>Mesomycoplasma</taxon>
    </lineage>
</organism>
<accession>Q4AA52</accession>
<reference key="1">
    <citation type="journal article" date="2005" name="J. Bacteriol.">
        <title>Swine and poultry pathogens: the complete genome sequences of two strains of Mycoplasma hyopneumoniae and a strain of Mycoplasma synoviae.</title>
        <authorList>
            <person name="Vasconcelos A.T.R."/>
            <person name="Ferreira H.B."/>
            <person name="Bizarro C.V."/>
            <person name="Bonatto S.L."/>
            <person name="Carvalho M.O."/>
            <person name="Pinto P.M."/>
            <person name="Almeida D.F."/>
            <person name="Almeida L.G.P."/>
            <person name="Almeida R."/>
            <person name="Alves-Junior L."/>
            <person name="Assuncao E.N."/>
            <person name="Azevedo V.A.C."/>
            <person name="Bogo M.R."/>
            <person name="Brigido M.M."/>
            <person name="Brocchi M."/>
            <person name="Burity H.A."/>
            <person name="Camargo A.A."/>
            <person name="Camargo S.S."/>
            <person name="Carepo M.S."/>
            <person name="Carraro D.M."/>
            <person name="de Mattos Cascardo J.C."/>
            <person name="Castro L.A."/>
            <person name="Cavalcanti G."/>
            <person name="Chemale G."/>
            <person name="Collevatti R.G."/>
            <person name="Cunha C.W."/>
            <person name="Dallagiovanna B."/>
            <person name="Dambros B.P."/>
            <person name="Dellagostin O.A."/>
            <person name="Falcao C."/>
            <person name="Fantinatti-Garboggini F."/>
            <person name="Felipe M.S.S."/>
            <person name="Fiorentin L."/>
            <person name="Franco G.R."/>
            <person name="Freitas N.S.A."/>
            <person name="Frias D."/>
            <person name="Grangeiro T.B."/>
            <person name="Grisard E.C."/>
            <person name="Guimaraes C.T."/>
            <person name="Hungria M."/>
            <person name="Jardim S.N."/>
            <person name="Krieger M.A."/>
            <person name="Laurino J.P."/>
            <person name="Lima L.F.A."/>
            <person name="Lopes M.I."/>
            <person name="Loreto E.L.S."/>
            <person name="Madeira H.M.F."/>
            <person name="Manfio G.P."/>
            <person name="Maranhao A.Q."/>
            <person name="Martinkovics C.T."/>
            <person name="Medeiros S.R.B."/>
            <person name="Moreira M.A.M."/>
            <person name="Neiva M."/>
            <person name="Ramalho-Neto C.E."/>
            <person name="Nicolas M.F."/>
            <person name="Oliveira S.C."/>
            <person name="Paixao R.F.C."/>
            <person name="Pedrosa F.O."/>
            <person name="Pena S.D.J."/>
            <person name="Pereira M."/>
            <person name="Pereira-Ferrari L."/>
            <person name="Piffer I."/>
            <person name="Pinto L.S."/>
            <person name="Potrich D.P."/>
            <person name="Salim A.C.M."/>
            <person name="Santos F.R."/>
            <person name="Schmitt R."/>
            <person name="Schneider M.P.C."/>
            <person name="Schrank A."/>
            <person name="Schrank I.S."/>
            <person name="Schuck A.F."/>
            <person name="Seuanez H.N."/>
            <person name="Silva D.W."/>
            <person name="Silva R."/>
            <person name="Silva S.C."/>
            <person name="Soares C.M.A."/>
            <person name="Souza K.R.L."/>
            <person name="Souza R.C."/>
            <person name="Staats C.C."/>
            <person name="Steffens M.B.R."/>
            <person name="Teixeira S.M.R."/>
            <person name="Urmenyi T.P."/>
            <person name="Vainstein M.H."/>
            <person name="Zuccherato L.W."/>
            <person name="Simpson A.J.G."/>
            <person name="Zaha A."/>
        </authorList>
    </citation>
    <scope>NUCLEOTIDE SEQUENCE [LARGE SCALE GENOMIC DNA]</scope>
    <source>
        <strain>J / ATCC 25934 / NCTC 10110</strain>
    </source>
</reference>